<feature type="chain" id="PRO_0000074476" description="Defensin ARD1">
    <location>
        <begin position="1"/>
        <end position="44"/>
    </location>
</feature>
<feature type="disulfide bond" evidence="1 2">
    <location>
        <begin position="7"/>
        <end position="32"/>
    </location>
</feature>
<feature type="disulfide bond" evidence="1 2">
    <location>
        <begin position="18"/>
        <end position="40"/>
    </location>
</feature>
<feature type="disulfide bond" evidence="1 2">
    <location>
        <begin position="22"/>
        <end position="42"/>
    </location>
</feature>
<feature type="mutagenesis site" description="Improves antifungal activity." evidence="2">
    <original>N</original>
    <variation>R</variation>
    <location>
        <position position="19"/>
    </location>
</feature>
<feature type="mutagenesis site" description="Improves antifungal activity." evidence="2">
    <original>A</original>
    <variation>L</variation>
    <location>
        <position position="36"/>
    </location>
</feature>
<feature type="strand" evidence="5">
    <location>
        <begin position="2"/>
        <end position="8"/>
    </location>
</feature>
<feature type="strand" evidence="5">
    <location>
        <begin position="11"/>
        <end position="14"/>
    </location>
</feature>
<feature type="helix" evidence="5">
    <location>
        <begin position="18"/>
        <end position="25"/>
    </location>
</feature>
<feature type="strand" evidence="5">
    <location>
        <begin position="27"/>
        <end position="34"/>
    </location>
</feature>
<feature type="helix" evidence="5">
    <location>
        <begin position="35"/>
        <end position="37"/>
    </location>
</feature>
<feature type="strand" evidence="5">
    <location>
        <begin position="39"/>
        <end position="43"/>
    </location>
</feature>
<protein>
    <recommendedName>
        <fullName>Defensin ARD1</fullName>
    </recommendedName>
</protein>
<reference evidence="3 4" key="1">
    <citation type="journal article" date="2004" name="Protein Sci.">
        <title>Lead optimization of antifungal peptides with 3D NMR structures analysis.</title>
        <authorList>
            <person name="Landon C."/>
            <person name="Barbault F."/>
            <person name="Legrain M."/>
            <person name="Menin L."/>
            <person name="Guenneugues M."/>
            <person name="Schott V."/>
            <person name="Vovelle F."/>
            <person name="Dimarcq J.-L."/>
        </authorList>
    </citation>
    <scope>PROTEIN SEQUENCE</scope>
    <scope>STRUCTURE BY NMR</scope>
    <scope>FUNCTION</scope>
    <scope>MASS SPECTROMETRY</scope>
    <scope>MUTAGENESIS OF ASN-19 AND ALA-36</scope>
    <source>
        <tissue evidence="2">Hemolymph</tissue>
    </source>
</reference>
<organism>
    <name type="scientific">Archaeoprepona demophon</name>
    <name type="common">One-spotted leafwing butterfly</name>
    <dbReference type="NCBI Taxonomy" id="191427"/>
    <lineage>
        <taxon>Eukaryota</taxon>
        <taxon>Metazoa</taxon>
        <taxon>Ecdysozoa</taxon>
        <taxon>Arthropoda</taxon>
        <taxon>Hexapoda</taxon>
        <taxon>Insecta</taxon>
        <taxon>Pterygota</taxon>
        <taxon>Neoptera</taxon>
        <taxon>Endopterygota</taxon>
        <taxon>Lepidoptera</taxon>
        <taxon>Glossata</taxon>
        <taxon>Ditrysia</taxon>
        <taxon>Papilionoidea</taxon>
        <taxon>Nymphalidae</taxon>
        <taxon>Charaxinae</taxon>
        <taxon>Preponini</taxon>
        <taxon>Archaeoprepona</taxon>
    </lineage>
</organism>
<name>DEFN_ARCDE</name>
<dbReference type="PDB" id="1OZZ">
    <property type="method" value="NMR"/>
    <property type="chains" value="A=1-44"/>
</dbReference>
<dbReference type="PDB" id="1P00">
    <property type="method" value="NMR"/>
    <property type="chains" value="A=1-44"/>
</dbReference>
<dbReference type="PDB" id="1P0A">
    <property type="method" value="NMR"/>
    <property type="chains" value="A=1-44"/>
</dbReference>
<dbReference type="PDBsum" id="1OZZ"/>
<dbReference type="PDBsum" id="1P00"/>
<dbReference type="PDBsum" id="1P0A"/>
<dbReference type="SMR" id="P84156"/>
<dbReference type="EvolutionaryTrace" id="P84156"/>
<dbReference type="GO" id="GO:0005576">
    <property type="term" value="C:extracellular region"/>
    <property type="evidence" value="ECO:0000304"/>
    <property type="project" value="UniProtKB"/>
</dbReference>
<dbReference type="GO" id="GO:0019732">
    <property type="term" value="P:antifungal humoral response"/>
    <property type="evidence" value="ECO:0000314"/>
    <property type="project" value="UniProtKB"/>
</dbReference>
<dbReference type="GO" id="GO:0006952">
    <property type="term" value="P:defense response"/>
    <property type="evidence" value="ECO:0000304"/>
    <property type="project" value="UniProtKB"/>
</dbReference>
<dbReference type="GO" id="GO:0045087">
    <property type="term" value="P:innate immune response"/>
    <property type="evidence" value="ECO:0007669"/>
    <property type="project" value="UniProtKB-KW"/>
</dbReference>
<dbReference type="GO" id="GO:0031640">
    <property type="term" value="P:killing of cells of another organism"/>
    <property type="evidence" value="ECO:0007669"/>
    <property type="project" value="UniProtKB-KW"/>
</dbReference>
<dbReference type="FunFam" id="3.30.30.10:FF:000012">
    <property type="entry name" value="Defensin ARD1"/>
    <property type="match status" value="1"/>
</dbReference>
<dbReference type="Gene3D" id="3.30.30.10">
    <property type="entry name" value="Knottin, scorpion toxin-like"/>
    <property type="match status" value="1"/>
</dbReference>
<dbReference type="InterPro" id="IPR001542">
    <property type="entry name" value="Defensin_invertebrate/fungal"/>
</dbReference>
<dbReference type="InterPro" id="IPR036574">
    <property type="entry name" value="Scorpion_toxin-like_sf"/>
</dbReference>
<dbReference type="SUPFAM" id="SSF57095">
    <property type="entry name" value="Scorpion toxin-like"/>
    <property type="match status" value="1"/>
</dbReference>
<dbReference type="PROSITE" id="PS51378">
    <property type="entry name" value="INVERT_DEFENSINS"/>
    <property type="match status" value="1"/>
</dbReference>
<comment type="function">
    <text evidence="2">Possesses potent anti-fungal activity.</text>
</comment>
<comment type="subcellular location">
    <subcellularLocation>
        <location evidence="1 2">Secreted</location>
    </subcellularLocation>
</comment>
<comment type="mass spectrometry" mass="4803.4" method="MALDI" evidence="2"/>
<comment type="similarity">
    <text evidence="1">Belongs to the invertebrate defensin family. Type 2 subfamily.</text>
</comment>
<keyword id="KW-0002">3D-structure</keyword>
<keyword id="KW-0929">Antimicrobial</keyword>
<keyword id="KW-0211">Defensin</keyword>
<keyword id="KW-0903">Direct protein sequencing</keyword>
<keyword id="KW-1015">Disulfide bond</keyword>
<keyword id="KW-0295">Fungicide</keyword>
<keyword id="KW-0391">Immunity</keyword>
<keyword id="KW-0399">Innate immunity</keyword>
<keyword id="KW-0964">Secreted</keyword>
<evidence type="ECO:0000255" key="1">
    <source>
        <dbReference type="PROSITE-ProRule" id="PRU00710"/>
    </source>
</evidence>
<evidence type="ECO:0000269" key="2">
    <source>
    </source>
</evidence>
<evidence type="ECO:0000305" key="3"/>
<evidence type="ECO:0000312" key="4">
    <source>
        <dbReference type="PDB" id="1OZZ"/>
    </source>
</evidence>
<evidence type="ECO:0007829" key="5">
    <source>
        <dbReference type="PDB" id="1OZZ"/>
    </source>
</evidence>
<sequence length="44" mass="4803">DKLIGSCVWGAVNYTSNCNAECKRRGYKGGHCGSFANVNCWCET</sequence>
<proteinExistence type="evidence at protein level"/>
<accession>P84156</accession>